<name>ESPG3_MYCS2</name>
<organism>
    <name type="scientific">Mycolicibacterium smegmatis (strain ATCC 700084 / mc(2)155)</name>
    <name type="common">Mycobacterium smegmatis</name>
    <dbReference type="NCBI Taxonomy" id="246196"/>
    <lineage>
        <taxon>Bacteria</taxon>
        <taxon>Bacillati</taxon>
        <taxon>Actinomycetota</taxon>
        <taxon>Actinomycetes</taxon>
        <taxon>Mycobacteriales</taxon>
        <taxon>Mycobacteriaceae</taxon>
        <taxon>Mycolicibacterium</taxon>
    </lineage>
</organism>
<proteinExistence type="evidence at protein level"/>
<accession>A0QQ45</accession>
<sequence>MGPNAVELTTDQAWCLADVLGAGSYPWVLAITPPYSDHSQRSAFLAAQSAELTRMGVVNSAGAVDPRVAQWITTVCRATQWLDLRFVSGPGDLLRGMVARRSEETVVALRNAQLVTFTAMDIGHQHALVPVLTAGLSGRKPARFDDFALPAAAGARADEQIRNGAPLAEVLEFLGVPPSARPLVESVFDGRRTYVEIVAGEHRDGHRVTTEVGVSIIDTPHGRILVHPTKAFDGEWISTFTPGSADAIAMAVERLTASLPSGSWFPDQPLTRDFDEDAATHREPVLQRRTQKA</sequence>
<dbReference type="EMBL" id="CP000480">
    <property type="protein sequence ID" value="ABK72998.1"/>
    <property type="molecule type" value="Genomic_DNA"/>
</dbReference>
<dbReference type="EMBL" id="CP001663">
    <property type="protein sequence ID" value="AFP37087.1"/>
    <property type="molecule type" value="Genomic_DNA"/>
</dbReference>
<dbReference type="RefSeq" id="WP_011727072.1">
    <property type="nucleotide sequence ID" value="NZ_SIJM01000009.1"/>
</dbReference>
<dbReference type="RefSeq" id="YP_885033.1">
    <property type="nucleotide sequence ID" value="NC_008596.1"/>
</dbReference>
<dbReference type="PDB" id="4L4W">
    <property type="method" value="X-ray"/>
    <property type="resolution" value="2.04 A"/>
    <property type="chains" value="A/B=1-293"/>
</dbReference>
<dbReference type="PDB" id="4RCL">
    <property type="method" value="X-ray"/>
    <property type="resolution" value="2.70 A"/>
    <property type="chains" value="A/B=1-293"/>
</dbReference>
<dbReference type="PDB" id="4W4J">
    <property type="method" value="X-ray"/>
    <property type="resolution" value="2.80 A"/>
    <property type="chains" value="A/B=1-293"/>
</dbReference>
<dbReference type="PDB" id="5SXL">
    <property type="method" value="X-ray"/>
    <property type="resolution" value="2.46 A"/>
    <property type="chains" value="A=1-293"/>
</dbReference>
<dbReference type="PDBsum" id="4L4W"/>
<dbReference type="PDBsum" id="4RCL"/>
<dbReference type="PDBsum" id="4W4J"/>
<dbReference type="PDBsum" id="5SXL"/>
<dbReference type="SASBDB" id="A0QQ45"/>
<dbReference type="SMR" id="A0QQ45"/>
<dbReference type="STRING" id="246196.MSMEG_0622"/>
<dbReference type="PaxDb" id="246196-MSMEI_0606"/>
<dbReference type="KEGG" id="msb:LJ00_03090"/>
<dbReference type="KEGG" id="msg:MSMEI_0606"/>
<dbReference type="KEGG" id="msm:MSMEG_0622"/>
<dbReference type="PATRIC" id="fig|246196.19.peg.618"/>
<dbReference type="eggNOG" id="ENOG5030P1E">
    <property type="taxonomic scope" value="Bacteria"/>
</dbReference>
<dbReference type="OrthoDB" id="4631918at2"/>
<dbReference type="EvolutionaryTrace" id="A0QQ45"/>
<dbReference type="Proteomes" id="UP000000757">
    <property type="component" value="Chromosome"/>
</dbReference>
<dbReference type="Proteomes" id="UP000006158">
    <property type="component" value="Chromosome"/>
</dbReference>
<dbReference type="GO" id="GO:0005737">
    <property type="term" value="C:cytoplasm"/>
    <property type="evidence" value="ECO:0007669"/>
    <property type="project" value="UniProtKB-SubCell"/>
</dbReference>
<dbReference type="InterPro" id="IPR025734">
    <property type="entry name" value="EspG"/>
</dbReference>
<dbReference type="Pfam" id="PF14011">
    <property type="entry name" value="ESX-1_EspG"/>
    <property type="match status" value="1"/>
</dbReference>
<protein>
    <recommendedName>
        <fullName evidence="4">ESX-3 secretion-associated protein EspG3</fullName>
    </recommendedName>
</protein>
<comment type="subcellular location">
    <subcellularLocation>
        <location evidence="1">Cytoplasm</location>
    </subcellularLocation>
</comment>
<comment type="disruption phenotype">
    <text evidence="2">Deletion of the gene impairs iron-bound mycobactin utilization and EsxG and EsxH export.</text>
</comment>
<comment type="similarity">
    <text evidence="4">Belongs to the EspG family.</text>
</comment>
<feature type="chain" id="PRO_0000435129" description="ESX-3 secretion-associated protein EspG3">
    <location>
        <begin position="1"/>
        <end position="293"/>
    </location>
</feature>
<feature type="strand" evidence="9">
    <location>
        <begin position="5"/>
        <end position="9"/>
    </location>
</feature>
<feature type="helix" evidence="9">
    <location>
        <begin position="10"/>
        <end position="19"/>
    </location>
</feature>
<feature type="helix" evidence="9">
    <location>
        <begin position="27"/>
        <end position="29"/>
    </location>
</feature>
<feature type="helix" evidence="9">
    <location>
        <begin position="38"/>
        <end position="54"/>
    </location>
</feature>
<feature type="helix" evidence="9">
    <location>
        <begin position="66"/>
        <end position="76"/>
    </location>
</feature>
<feature type="strand" evidence="9">
    <location>
        <begin position="79"/>
        <end position="86"/>
    </location>
</feature>
<feature type="turn" evidence="11">
    <location>
        <begin position="89"/>
        <end position="91"/>
    </location>
</feature>
<feature type="strand" evidence="9">
    <location>
        <begin position="94"/>
        <end position="101"/>
    </location>
</feature>
<feature type="strand" evidence="9">
    <location>
        <begin position="104"/>
        <end position="111"/>
    </location>
</feature>
<feature type="strand" evidence="9">
    <location>
        <begin position="114"/>
        <end position="120"/>
    </location>
</feature>
<feature type="helix" evidence="9">
    <location>
        <begin position="125"/>
        <end position="128"/>
    </location>
</feature>
<feature type="helix" evidence="9">
    <location>
        <begin position="129"/>
        <end position="133"/>
    </location>
</feature>
<feature type="strand" evidence="9">
    <location>
        <begin position="147"/>
        <end position="150"/>
    </location>
</feature>
<feature type="helix" evidence="9">
    <location>
        <begin position="151"/>
        <end position="162"/>
    </location>
</feature>
<feature type="helix" evidence="9">
    <location>
        <begin position="167"/>
        <end position="174"/>
    </location>
</feature>
<feature type="helix" evidence="9">
    <location>
        <begin position="178"/>
        <end position="180"/>
    </location>
</feature>
<feature type="helix" evidence="9">
    <location>
        <begin position="181"/>
        <end position="187"/>
    </location>
</feature>
<feature type="strand" evidence="9">
    <location>
        <begin position="193"/>
        <end position="203"/>
    </location>
</feature>
<feature type="strand" evidence="9">
    <location>
        <begin position="206"/>
        <end position="209"/>
    </location>
</feature>
<feature type="strand" evidence="9">
    <location>
        <begin position="214"/>
        <end position="219"/>
    </location>
</feature>
<feature type="strand" evidence="9">
    <location>
        <begin position="222"/>
        <end position="231"/>
    </location>
</feature>
<feature type="strand" evidence="10">
    <location>
        <begin position="232"/>
        <end position="234"/>
    </location>
</feature>
<feature type="strand" evidence="9">
    <location>
        <begin position="236"/>
        <end position="242"/>
    </location>
</feature>
<feature type="helix" evidence="9">
    <location>
        <begin position="245"/>
        <end position="257"/>
    </location>
</feature>
<keyword id="KW-0002">3D-structure</keyword>
<keyword id="KW-0143">Chaperone</keyword>
<keyword id="KW-0963">Cytoplasm</keyword>
<keyword id="KW-1185">Reference proteome</keyword>
<evidence type="ECO:0000250" key="1">
    <source>
        <dbReference type="UniProtKB" id="B2HSU5"/>
    </source>
</evidence>
<evidence type="ECO:0000269" key="2">
    <source>
    </source>
</evidence>
<evidence type="ECO:0000303" key="3">
    <source>
    </source>
</evidence>
<evidence type="ECO:0000305" key="4"/>
<evidence type="ECO:0000312" key="5">
    <source>
        <dbReference type="EMBL" id="ABK72998.1"/>
    </source>
</evidence>
<evidence type="ECO:0000312" key="6">
    <source>
        <dbReference type="EMBL" id="AFP37087.1"/>
    </source>
</evidence>
<evidence type="ECO:0007744" key="7">
    <source>
        <dbReference type="PDB" id="4L4W"/>
    </source>
</evidence>
<evidence type="ECO:0007744" key="8">
    <source>
        <dbReference type="PDB" id="4W4J"/>
    </source>
</evidence>
<evidence type="ECO:0007829" key="9">
    <source>
        <dbReference type="PDB" id="4L4W"/>
    </source>
</evidence>
<evidence type="ECO:0007829" key="10">
    <source>
        <dbReference type="PDB" id="4RCL"/>
    </source>
</evidence>
<evidence type="ECO:0007829" key="11">
    <source>
        <dbReference type="PDB" id="4W4J"/>
    </source>
</evidence>
<gene>
    <name evidence="3" type="primary">espG3</name>
    <name evidence="5" type="ordered locus">MSMEG_0622</name>
    <name evidence="6" type="ordered locus">MSMEI_0606</name>
</gene>
<reference key="1">
    <citation type="submission" date="2006-10" db="EMBL/GenBank/DDBJ databases">
        <authorList>
            <person name="Fleischmann R.D."/>
            <person name="Dodson R.J."/>
            <person name="Haft D.H."/>
            <person name="Merkel J.S."/>
            <person name="Nelson W.C."/>
            <person name="Fraser C.M."/>
        </authorList>
    </citation>
    <scope>NUCLEOTIDE SEQUENCE [LARGE SCALE GENOMIC DNA]</scope>
    <source>
        <strain>ATCC 700084 / mc(2)155</strain>
    </source>
</reference>
<reference key="2">
    <citation type="journal article" date="2007" name="Genome Biol.">
        <title>Interrupted coding sequences in Mycobacterium smegmatis: authentic mutations or sequencing errors?</title>
        <authorList>
            <person name="Deshayes C."/>
            <person name="Perrodou E."/>
            <person name="Gallien S."/>
            <person name="Euphrasie D."/>
            <person name="Schaeffer C."/>
            <person name="Van-Dorsselaer A."/>
            <person name="Poch O."/>
            <person name="Lecompte O."/>
            <person name="Reyrat J.-M."/>
        </authorList>
    </citation>
    <scope>NUCLEOTIDE SEQUENCE [LARGE SCALE GENOMIC DNA]</scope>
    <source>
        <strain>ATCC 700084 / mc(2)155</strain>
    </source>
</reference>
<reference key="3">
    <citation type="journal article" date="2009" name="Genome Res.">
        <title>Ortho-proteogenomics: multiple proteomes investigation through orthology and a new MS-based protocol.</title>
        <authorList>
            <person name="Gallien S."/>
            <person name="Perrodou E."/>
            <person name="Carapito C."/>
            <person name="Deshayes C."/>
            <person name="Reyrat J.-M."/>
            <person name="Van Dorsselaer A."/>
            <person name="Poch O."/>
            <person name="Schaeffer C."/>
            <person name="Lecompte O."/>
        </authorList>
    </citation>
    <scope>NUCLEOTIDE SEQUENCE [LARGE SCALE GENOMIC DNA]</scope>
    <source>
        <strain>ATCC 700084 / mc(2)155</strain>
    </source>
</reference>
<reference key="4">
    <citation type="journal article" date="2014" name="MBio">
        <title>Mycobacterial Esx-3 requires multiple components for iron acquisition.</title>
        <authorList>
            <person name="Siegrist M.S."/>
            <person name="Steigedal M."/>
            <person name="Ahmad R."/>
            <person name="Mehra A."/>
            <person name="Dragset M.S."/>
            <person name="Schuster B.M."/>
            <person name="Philips J.A."/>
            <person name="Carr S.A."/>
            <person name="Rubin E.J."/>
        </authorList>
    </citation>
    <scope>DISRUPTION PHENOTYPE</scope>
</reference>
<reference evidence="7" key="5">
    <citation type="submission" date="2013-06" db="PDB data bank">
        <title>Structure of the ESX secretion system protein.</title>
        <authorList>
            <person name="Korotkov K.V."/>
        </authorList>
    </citation>
    <scope>X-RAY CRYSTALLOGRAPHY (2.04 ANGSTROMS)</scope>
</reference>
<reference evidence="8" key="6">
    <citation type="journal article" date="2014" name="Proc. Natl. Acad. Sci. U.S.A.">
        <title>Structure of a PE-PPE-EspG complex from Mycobacterium tuberculosis reveals molecular specificity of ESX protein secretion.</title>
        <authorList>
            <person name="Ekiert D.C."/>
            <person name="Cox J.S."/>
        </authorList>
    </citation>
    <scope>X-RAY CRYSTALLOGRAPHY (2.80 ANGSTROMS)</scope>
</reference>